<sequence>MAKAKFERNKPHCNIGTIGHVDHGKTSLTAAITKVLAEAGGATFTAYDQIDKAPEEKARGITISTSHVEYETPNRHYAHVDCPGHADYVKNMITGAAQMDGAILVVSAADGPMPQTREHILLARQVGVPAIVVFLNKCDMVDDPELLELVEMEVRELLSKYDFPGDDIPIIKGSALAVLENSDPKLGHDAVLELMKAVDAYIPQPERPVDQPFLMPVEDVFSISGRGTVVTGRVERGIVKVGEEIEIVGIRPTQKTTVTGVEMFRKLLDQGQAGDNIGALLRGTKREDVERGQVLCKPGSVKPHTKFKAEAYILTKEEGGRHTPFFTNYRPQFYFRTTDVTGVVHLPAGTEMVMPGDNVAMEVHLIVPIAMEEKLRFAIREGGRTVGAGVVASIIE</sequence>
<organism>
    <name type="scientific">Nitrobacter hamburgensis (strain DSM 10229 / NCIMB 13809 / X14)</name>
    <dbReference type="NCBI Taxonomy" id="323097"/>
    <lineage>
        <taxon>Bacteria</taxon>
        <taxon>Pseudomonadati</taxon>
        <taxon>Pseudomonadota</taxon>
        <taxon>Alphaproteobacteria</taxon>
        <taxon>Hyphomicrobiales</taxon>
        <taxon>Nitrobacteraceae</taxon>
        <taxon>Nitrobacter</taxon>
    </lineage>
</organism>
<keyword id="KW-0963">Cytoplasm</keyword>
<keyword id="KW-0251">Elongation factor</keyword>
<keyword id="KW-0342">GTP-binding</keyword>
<keyword id="KW-0378">Hydrolase</keyword>
<keyword id="KW-0460">Magnesium</keyword>
<keyword id="KW-0479">Metal-binding</keyword>
<keyword id="KW-0547">Nucleotide-binding</keyword>
<keyword id="KW-0648">Protein biosynthesis</keyword>
<keyword id="KW-1185">Reference proteome</keyword>
<proteinExistence type="inferred from homology"/>
<accession>Q1QN32</accession>
<protein>
    <recommendedName>
        <fullName evidence="2">Elongation factor Tu</fullName>
        <shortName evidence="2">EF-Tu</shortName>
        <ecNumber evidence="2">3.6.5.3</ecNumber>
    </recommendedName>
</protein>
<gene>
    <name evidence="2" type="primary">tuf</name>
    <name type="ordered locus">Nham_1543</name>
</gene>
<comment type="function">
    <text evidence="2">GTP hydrolase that promotes the GTP-dependent binding of aminoacyl-tRNA to the A-site of ribosomes during protein biosynthesis.</text>
</comment>
<comment type="catalytic activity">
    <reaction evidence="2">
        <text>GTP + H2O = GDP + phosphate + H(+)</text>
        <dbReference type="Rhea" id="RHEA:19669"/>
        <dbReference type="ChEBI" id="CHEBI:15377"/>
        <dbReference type="ChEBI" id="CHEBI:15378"/>
        <dbReference type="ChEBI" id="CHEBI:37565"/>
        <dbReference type="ChEBI" id="CHEBI:43474"/>
        <dbReference type="ChEBI" id="CHEBI:58189"/>
        <dbReference type="EC" id="3.6.5.3"/>
    </reaction>
    <physiologicalReaction direction="left-to-right" evidence="2">
        <dbReference type="Rhea" id="RHEA:19670"/>
    </physiologicalReaction>
</comment>
<comment type="subunit">
    <text evidence="2">Monomer.</text>
</comment>
<comment type="subcellular location">
    <subcellularLocation>
        <location evidence="2">Cytoplasm</location>
    </subcellularLocation>
</comment>
<comment type="similarity">
    <text evidence="2">Belongs to the TRAFAC class translation factor GTPase superfamily. Classic translation factor GTPase family. EF-Tu/EF-1A subfamily.</text>
</comment>
<evidence type="ECO:0000250" key="1"/>
<evidence type="ECO:0000255" key="2">
    <source>
        <dbReference type="HAMAP-Rule" id="MF_00118"/>
    </source>
</evidence>
<feature type="chain" id="PRO_1000015711" description="Elongation factor Tu">
    <location>
        <begin position="1"/>
        <end position="396"/>
    </location>
</feature>
<feature type="domain" description="tr-type G">
    <location>
        <begin position="10"/>
        <end position="206"/>
    </location>
</feature>
<feature type="region of interest" description="G1" evidence="1">
    <location>
        <begin position="19"/>
        <end position="26"/>
    </location>
</feature>
<feature type="region of interest" description="G2" evidence="1">
    <location>
        <begin position="60"/>
        <end position="64"/>
    </location>
</feature>
<feature type="region of interest" description="G3" evidence="1">
    <location>
        <begin position="81"/>
        <end position="84"/>
    </location>
</feature>
<feature type="region of interest" description="G4" evidence="1">
    <location>
        <begin position="136"/>
        <end position="139"/>
    </location>
</feature>
<feature type="region of interest" description="G5" evidence="1">
    <location>
        <begin position="174"/>
        <end position="176"/>
    </location>
</feature>
<feature type="binding site" evidence="2">
    <location>
        <begin position="19"/>
        <end position="26"/>
    </location>
    <ligand>
        <name>GTP</name>
        <dbReference type="ChEBI" id="CHEBI:37565"/>
    </ligand>
</feature>
<feature type="binding site" evidence="2">
    <location>
        <position position="26"/>
    </location>
    <ligand>
        <name>Mg(2+)</name>
        <dbReference type="ChEBI" id="CHEBI:18420"/>
    </ligand>
</feature>
<feature type="binding site" evidence="2">
    <location>
        <begin position="81"/>
        <end position="85"/>
    </location>
    <ligand>
        <name>GTP</name>
        <dbReference type="ChEBI" id="CHEBI:37565"/>
    </ligand>
</feature>
<feature type="binding site" evidence="2">
    <location>
        <begin position="136"/>
        <end position="139"/>
    </location>
    <ligand>
        <name>GTP</name>
        <dbReference type="ChEBI" id="CHEBI:37565"/>
    </ligand>
</feature>
<name>EFTU_NITHX</name>
<reference key="1">
    <citation type="submission" date="2006-03" db="EMBL/GenBank/DDBJ databases">
        <title>Complete sequence of chromosome of Nitrobacter hamburgensis X14.</title>
        <authorList>
            <consortium name="US DOE Joint Genome Institute"/>
            <person name="Copeland A."/>
            <person name="Lucas S."/>
            <person name="Lapidus A."/>
            <person name="Barry K."/>
            <person name="Detter J.C."/>
            <person name="Glavina del Rio T."/>
            <person name="Hammon N."/>
            <person name="Israni S."/>
            <person name="Dalin E."/>
            <person name="Tice H."/>
            <person name="Pitluck S."/>
            <person name="Chain P."/>
            <person name="Malfatti S."/>
            <person name="Shin M."/>
            <person name="Vergez L."/>
            <person name="Schmutz J."/>
            <person name="Larimer F."/>
            <person name="Land M."/>
            <person name="Hauser L."/>
            <person name="Kyrpides N."/>
            <person name="Ivanova N."/>
            <person name="Ward B."/>
            <person name="Arp D."/>
            <person name="Klotz M."/>
            <person name="Stein L."/>
            <person name="O'Mullan G."/>
            <person name="Starkenburg S."/>
            <person name="Sayavedra L."/>
            <person name="Poret-Peterson A.T."/>
            <person name="Gentry M.E."/>
            <person name="Bruce D."/>
            <person name="Richardson P."/>
        </authorList>
    </citation>
    <scope>NUCLEOTIDE SEQUENCE [LARGE SCALE GENOMIC DNA]</scope>
    <source>
        <strain>DSM 10229 / NCIMB 13809 / X14</strain>
    </source>
</reference>
<dbReference type="EC" id="3.6.5.3" evidence="2"/>
<dbReference type="EMBL" id="CP000319">
    <property type="protein sequence ID" value="ABE62365.1"/>
    <property type="molecule type" value="Genomic_DNA"/>
</dbReference>
<dbReference type="RefSeq" id="WP_011510053.1">
    <property type="nucleotide sequence ID" value="NC_007964.1"/>
</dbReference>
<dbReference type="SMR" id="Q1QN32"/>
<dbReference type="STRING" id="323097.Nham_1543"/>
<dbReference type="KEGG" id="nha:Nham_1543"/>
<dbReference type="eggNOG" id="COG0050">
    <property type="taxonomic scope" value="Bacteria"/>
</dbReference>
<dbReference type="HOGENOM" id="CLU_007265_0_1_5"/>
<dbReference type="OrthoDB" id="9803139at2"/>
<dbReference type="Proteomes" id="UP000001953">
    <property type="component" value="Chromosome"/>
</dbReference>
<dbReference type="GO" id="GO:0005829">
    <property type="term" value="C:cytosol"/>
    <property type="evidence" value="ECO:0007669"/>
    <property type="project" value="TreeGrafter"/>
</dbReference>
<dbReference type="GO" id="GO:0005525">
    <property type="term" value="F:GTP binding"/>
    <property type="evidence" value="ECO:0007669"/>
    <property type="project" value="UniProtKB-UniRule"/>
</dbReference>
<dbReference type="GO" id="GO:0003924">
    <property type="term" value="F:GTPase activity"/>
    <property type="evidence" value="ECO:0007669"/>
    <property type="project" value="InterPro"/>
</dbReference>
<dbReference type="GO" id="GO:0097216">
    <property type="term" value="F:guanosine tetraphosphate binding"/>
    <property type="evidence" value="ECO:0007669"/>
    <property type="project" value="UniProtKB-ARBA"/>
</dbReference>
<dbReference type="GO" id="GO:0003746">
    <property type="term" value="F:translation elongation factor activity"/>
    <property type="evidence" value="ECO:0007669"/>
    <property type="project" value="UniProtKB-UniRule"/>
</dbReference>
<dbReference type="CDD" id="cd01884">
    <property type="entry name" value="EF_Tu"/>
    <property type="match status" value="1"/>
</dbReference>
<dbReference type="CDD" id="cd03697">
    <property type="entry name" value="EFTU_II"/>
    <property type="match status" value="1"/>
</dbReference>
<dbReference type="CDD" id="cd03707">
    <property type="entry name" value="EFTU_III"/>
    <property type="match status" value="1"/>
</dbReference>
<dbReference type="FunFam" id="2.40.30.10:FF:000001">
    <property type="entry name" value="Elongation factor Tu"/>
    <property type="match status" value="1"/>
</dbReference>
<dbReference type="FunFam" id="3.40.50.300:FF:000003">
    <property type="entry name" value="Elongation factor Tu"/>
    <property type="match status" value="1"/>
</dbReference>
<dbReference type="Gene3D" id="3.40.50.300">
    <property type="entry name" value="P-loop containing nucleotide triphosphate hydrolases"/>
    <property type="match status" value="1"/>
</dbReference>
<dbReference type="Gene3D" id="2.40.30.10">
    <property type="entry name" value="Translation factors"/>
    <property type="match status" value="2"/>
</dbReference>
<dbReference type="HAMAP" id="MF_00118_B">
    <property type="entry name" value="EF_Tu_B"/>
    <property type="match status" value="1"/>
</dbReference>
<dbReference type="InterPro" id="IPR041709">
    <property type="entry name" value="EF-Tu_GTP-bd"/>
</dbReference>
<dbReference type="InterPro" id="IPR050055">
    <property type="entry name" value="EF-Tu_GTPase"/>
</dbReference>
<dbReference type="InterPro" id="IPR004161">
    <property type="entry name" value="EFTu-like_2"/>
</dbReference>
<dbReference type="InterPro" id="IPR033720">
    <property type="entry name" value="EFTU_2"/>
</dbReference>
<dbReference type="InterPro" id="IPR031157">
    <property type="entry name" value="G_TR_CS"/>
</dbReference>
<dbReference type="InterPro" id="IPR027417">
    <property type="entry name" value="P-loop_NTPase"/>
</dbReference>
<dbReference type="InterPro" id="IPR005225">
    <property type="entry name" value="Small_GTP-bd"/>
</dbReference>
<dbReference type="InterPro" id="IPR000795">
    <property type="entry name" value="T_Tr_GTP-bd_dom"/>
</dbReference>
<dbReference type="InterPro" id="IPR009000">
    <property type="entry name" value="Transl_B-barrel_sf"/>
</dbReference>
<dbReference type="InterPro" id="IPR009001">
    <property type="entry name" value="Transl_elong_EF1A/Init_IF2_C"/>
</dbReference>
<dbReference type="InterPro" id="IPR004541">
    <property type="entry name" value="Transl_elong_EFTu/EF1A_bac/org"/>
</dbReference>
<dbReference type="InterPro" id="IPR004160">
    <property type="entry name" value="Transl_elong_EFTu/EF1A_C"/>
</dbReference>
<dbReference type="NCBIfam" id="TIGR00485">
    <property type="entry name" value="EF-Tu"/>
    <property type="match status" value="1"/>
</dbReference>
<dbReference type="NCBIfam" id="NF000766">
    <property type="entry name" value="PRK00049.1"/>
    <property type="match status" value="1"/>
</dbReference>
<dbReference type="NCBIfam" id="NF009372">
    <property type="entry name" value="PRK12735.1"/>
    <property type="match status" value="1"/>
</dbReference>
<dbReference type="NCBIfam" id="NF009373">
    <property type="entry name" value="PRK12736.1"/>
    <property type="match status" value="1"/>
</dbReference>
<dbReference type="NCBIfam" id="TIGR00231">
    <property type="entry name" value="small_GTP"/>
    <property type="match status" value="1"/>
</dbReference>
<dbReference type="PANTHER" id="PTHR43721:SF22">
    <property type="entry name" value="ELONGATION FACTOR TU, MITOCHONDRIAL"/>
    <property type="match status" value="1"/>
</dbReference>
<dbReference type="PANTHER" id="PTHR43721">
    <property type="entry name" value="ELONGATION FACTOR TU-RELATED"/>
    <property type="match status" value="1"/>
</dbReference>
<dbReference type="Pfam" id="PF00009">
    <property type="entry name" value="GTP_EFTU"/>
    <property type="match status" value="1"/>
</dbReference>
<dbReference type="Pfam" id="PF03144">
    <property type="entry name" value="GTP_EFTU_D2"/>
    <property type="match status" value="1"/>
</dbReference>
<dbReference type="Pfam" id="PF03143">
    <property type="entry name" value="GTP_EFTU_D3"/>
    <property type="match status" value="1"/>
</dbReference>
<dbReference type="PRINTS" id="PR00315">
    <property type="entry name" value="ELONGATNFCT"/>
</dbReference>
<dbReference type="SUPFAM" id="SSF50465">
    <property type="entry name" value="EF-Tu/eEF-1alpha/eIF2-gamma C-terminal domain"/>
    <property type="match status" value="1"/>
</dbReference>
<dbReference type="SUPFAM" id="SSF52540">
    <property type="entry name" value="P-loop containing nucleoside triphosphate hydrolases"/>
    <property type="match status" value="1"/>
</dbReference>
<dbReference type="SUPFAM" id="SSF50447">
    <property type="entry name" value="Translation proteins"/>
    <property type="match status" value="1"/>
</dbReference>
<dbReference type="PROSITE" id="PS00301">
    <property type="entry name" value="G_TR_1"/>
    <property type="match status" value="1"/>
</dbReference>
<dbReference type="PROSITE" id="PS51722">
    <property type="entry name" value="G_TR_2"/>
    <property type="match status" value="1"/>
</dbReference>